<name>TRM56_METKA</name>
<accession>Q8TX72</accession>
<proteinExistence type="inferred from homology"/>
<dbReference type="EC" id="2.1.1.206" evidence="1"/>
<dbReference type="EMBL" id="AE009439">
    <property type="protein sequence ID" value="AAM02017.1"/>
    <property type="molecule type" value="Genomic_DNA"/>
</dbReference>
<dbReference type="RefSeq" id="WP_011019172.1">
    <property type="nucleotide sequence ID" value="NC_003551.1"/>
</dbReference>
<dbReference type="SMR" id="Q8TX72"/>
<dbReference type="FunCoup" id="Q8TX72">
    <property type="interactions" value="1"/>
</dbReference>
<dbReference type="STRING" id="190192.MK0803"/>
<dbReference type="PaxDb" id="190192-MK0803"/>
<dbReference type="EnsemblBacteria" id="AAM02017">
    <property type="protein sequence ID" value="AAM02017"/>
    <property type="gene ID" value="MK0803"/>
</dbReference>
<dbReference type="GeneID" id="1476904"/>
<dbReference type="KEGG" id="mka:MK0803"/>
<dbReference type="PATRIC" id="fig|190192.8.peg.844"/>
<dbReference type="HOGENOM" id="CLU_123709_0_0_2"/>
<dbReference type="InParanoid" id="Q8TX72"/>
<dbReference type="OrthoDB" id="14397at2157"/>
<dbReference type="Proteomes" id="UP000001826">
    <property type="component" value="Chromosome"/>
</dbReference>
<dbReference type="GO" id="GO:0005737">
    <property type="term" value="C:cytoplasm"/>
    <property type="evidence" value="ECO:0007669"/>
    <property type="project" value="UniProtKB-SubCell"/>
</dbReference>
<dbReference type="GO" id="GO:0106059">
    <property type="term" value="F:tRNA (cytidine(56)-2'-O)-methyltransferase activity"/>
    <property type="evidence" value="ECO:0007669"/>
    <property type="project" value="UniProtKB-EC"/>
</dbReference>
<dbReference type="GO" id="GO:0002128">
    <property type="term" value="P:tRNA nucleoside ribose methylation"/>
    <property type="evidence" value="ECO:0007669"/>
    <property type="project" value="UniProtKB-UniRule"/>
</dbReference>
<dbReference type="CDD" id="cd18083">
    <property type="entry name" value="aTrm56-like"/>
    <property type="match status" value="1"/>
</dbReference>
<dbReference type="Gene3D" id="3.40.1280.10">
    <property type="match status" value="1"/>
</dbReference>
<dbReference type="HAMAP" id="MF_00077">
    <property type="entry name" value="tRNA_methyltr_aTrm56"/>
    <property type="match status" value="1"/>
</dbReference>
<dbReference type="InterPro" id="IPR029028">
    <property type="entry name" value="Alpha/beta_knot_MTases"/>
</dbReference>
<dbReference type="InterPro" id="IPR029026">
    <property type="entry name" value="tRNA_m1G_MTases_N"/>
</dbReference>
<dbReference type="InterPro" id="IPR002845">
    <property type="entry name" value="tRNA_mtfrase_aTrm56"/>
</dbReference>
<dbReference type="NCBIfam" id="NF003048">
    <property type="entry name" value="PRK03958.1"/>
    <property type="match status" value="1"/>
</dbReference>
<dbReference type="PANTHER" id="PTHR42197">
    <property type="entry name" value="TRNA (CYTIDINE(56)-2'-O)-METHYLTRANSFERASE"/>
    <property type="match status" value="1"/>
</dbReference>
<dbReference type="PANTHER" id="PTHR42197:SF1">
    <property type="entry name" value="TRNA (CYTIDINE(56)-2'-O)-METHYLTRANSFERASE"/>
    <property type="match status" value="1"/>
</dbReference>
<dbReference type="Pfam" id="PF01994">
    <property type="entry name" value="Trm56"/>
    <property type="match status" value="1"/>
</dbReference>
<dbReference type="PIRSF" id="PIRSF016123">
    <property type="entry name" value="UCP016123"/>
    <property type="match status" value="1"/>
</dbReference>
<dbReference type="SUPFAM" id="SSF75217">
    <property type="entry name" value="alpha/beta knot"/>
    <property type="match status" value="1"/>
</dbReference>
<reference key="1">
    <citation type="journal article" date="2002" name="Proc. Natl. Acad. Sci. U.S.A.">
        <title>The complete genome of hyperthermophile Methanopyrus kandleri AV19 and monophyly of archaeal methanogens.</title>
        <authorList>
            <person name="Slesarev A.I."/>
            <person name="Mezhevaya K.V."/>
            <person name="Makarova K.S."/>
            <person name="Polushin N.N."/>
            <person name="Shcherbinina O.V."/>
            <person name="Shakhova V.V."/>
            <person name="Belova G.I."/>
            <person name="Aravind L."/>
            <person name="Natale D.A."/>
            <person name="Rogozin I.B."/>
            <person name="Tatusov R.L."/>
            <person name="Wolf Y.I."/>
            <person name="Stetter K.O."/>
            <person name="Malykh A.G."/>
            <person name="Koonin E.V."/>
            <person name="Kozyavkin S.A."/>
        </authorList>
    </citation>
    <scope>NUCLEOTIDE SEQUENCE [LARGE SCALE GENOMIC DNA]</scope>
    <source>
        <strain>AV19 / DSM 6324 / JCM 9639 / NBRC 100938</strain>
    </source>
</reference>
<comment type="function">
    <text evidence="1">Specifically catalyzes the AdoMet-dependent 2'-O-ribose methylation of cytidine at position 56 in tRNAs.</text>
</comment>
<comment type="catalytic activity">
    <reaction evidence="1">
        <text>cytidine(56) in tRNA + S-adenosyl-L-methionine = 2'-O-methylcytidine(56) in tRNA + S-adenosyl-L-homocysteine + H(+)</text>
        <dbReference type="Rhea" id="RHEA:42968"/>
        <dbReference type="Rhea" id="RHEA-COMP:10308"/>
        <dbReference type="Rhea" id="RHEA-COMP:10309"/>
        <dbReference type="ChEBI" id="CHEBI:15378"/>
        <dbReference type="ChEBI" id="CHEBI:57856"/>
        <dbReference type="ChEBI" id="CHEBI:59789"/>
        <dbReference type="ChEBI" id="CHEBI:74495"/>
        <dbReference type="ChEBI" id="CHEBI:82748"/>
        <dbReference type="EC" id="2.1.1.206"/>
    </reaction>
</comment>
<comment type="subunit">
    <text evidence="1">Homodimer.</text>
</comment>
<comment type="subcellular location">
    <subcellularLocation>
        <location evidence="1">Cytoplasm</location>
    </subcellularLocation>
</comment>
<comment type="similarity">
    <text evidence="1">Belongs to the aTrm56 family.</text>
</comment>
<evidence type="ECO:0000255" key="1">
    <source>
        <dbReference type="HAMAP-Rule" id="MF_00077"/>
    </source>
</evidence>
<keyword id="KW-0963">Cytoplasm</keyword>
<keyword id="KW-0489">Methyltransferase</keyword>
<keyword id="KW-1185">Reference proteome</keyword>
<keyword id="KW-0949">S-adenosyl-L-methionine</keyword>
<keyword id="KW-0808">Transferase</keyword>
<keyword id="KW-0819">tRNA processing</keyword>
<feature type="chain" id="PRO_0000146930" description="tRNA (cytidine(56)-2'-O)-methyltransferase">
    <location>
        <begin position="1"/>
        <end position="178"/>
    </location>
</feature>
<feature type="binding site" evidence="1">
    <location>
        <position position="88"/>
    </location>
    <ligand>
        <name>S-adenosyl-L-methionine</name>
        <dbReference type="ChEBI" id="CHEBI:59789"/>
    </ligand>
</feature>
<protein>
    <recommendedName>
        <fullName evidence="1">tRNA (cytidine(56)-2'-O)-methyltransferase</fullName>
        <ecNumber evidence="1">2.1.1.206</ecNumber>
    </recommendedName>
    <alternativeName>
        <fullName evidence="1">tRNA ribose 2'-O-methyltransferase aTrm56</fullName>
    </alternativeName>
</protein>
<gene>
    <name type="ordered locus">MK0803</name>
</gene>
<organism>
    <name type="scientific">Methanopyrus kandleri (strain AV19 / DSM 6324 / JCM 9639 / NBRC 100938)</name>
    <dbReference type="NCBI Taxonomy" id="190192"/>
    <lineage>
        <taxon>Archaea</taxon>
        <taxon>Methanobacteriati</taxon>
        <taxon>Methanobacteriota</taxon>
        <taxon>Methanomada group</taxon>
        <taxon>Methanopyri</taxon>
        <taxon>Methanopyrales</taxon>
        <taxon>Methanopyraceae</taxon>
        <taxon>Methanopyrus</taxon>
    </lineage>
</organism>
<sequence>MELEPRTVVLRLGHRRERDKRITTHVCLTARAFGAAGVLISGDHDESVIESVEDVVERWGGPFTVQWVGNWRRVIKDWKRSGGSVVHLTMYGLHIDDVIGELRGENELLVIVGAGKVPAEVFELSDYNVAIGHQPHSEVAALAVFLDRLYEGKELHREFERARLRVVPSEKGKKVERL</sequence>